<gene>
    <name type="primary">PPM1</name>
    <name type="ordered locus">ADR178W</name>
</gene>
<keyword id="KW-0489">Methyltransferase</keyword>
<keyword id="KW-1185">Reference proteome</keyword>
<keyword id="KW-0949">S-adenosyl-L-methionine</keyword>
<keyword id="KW-0808">Transferase</keyword>
<name>LCMT1_EREGS</name>
<protein>
    <recommendedName>
        <fullName>Leucine carboxyl methyltransferase 1</fullName>
        <ecNumber>2.1.1.233</ecNumber>
    </recommendedName>
    <alternativeName>
        <fullName>Protein phosphatase methyltransferase 1</fullName>
    </alternativeName>
    <alternativeName>
        <fullName>[Phosphatase 2A protein]-leucine-carboxy methyltransferase 1</fullName>
    </alternativeName>
</protein>
<feature type="chain" id="PRO_0000226122" description="Leucine carboxyl methyltransferase 1">
    <location>
        <begin position="1"/>
        <end position="325"/>
    </location>
</feature>
<feature type="binding site" evidence="1">
    <location>
        <position position="79"/>
    </location>
    <ligand>
        <name>S-adenosyl-L-methionine</name>
        <dbReference type="ChEBI" id="CHEBI:59789"/>
    </ligand>
</feature>
<feature type="binding site" evidence="1">
    <location>
        <position position="104"/>
    </location>
    <ligand>
        <name>S-adenosyl-L-methionine</name>
        <dbReference type="ChEBI" id="CHEBI:59789"/>
    </ligand>
</feature>
<feature type="binding site" evidence="1">
    <location>
        <position position="127"/>
    </location>
    <ligand>
        <name>S-adenosyl-L-methionine</name>
        <dbReference type="ChEBI" id="CHEBI:59789"/>
    </ligand>
</feature>
<feature type="binding site" evidence="1">
    <location>
        <begin position="174"/>
        <end position="175"/>
    </location>
    <ligand>
        <name>S-adenosyl-L-methionine</name>
        <dbReference type="ChEBI" id="CHEBI:59789"/>
    </ligand>
</feature>
<feature type="binding site" evidence="1">
    <location>
        <position position="200"/>
    </location>
    <ligand>
        <name>S-adenosyl-L-methionine</name>
        <dbReference type="ChEBI" id="CHEBI:59789"/>
    </ligand>
</feature>
<reference key="1">
    <citation type="journal article" date="2004" name="Science">
        <title>The Ashbya gossypii genome as a tool for mapping the ancient Saccharomyces cerevisiae genome.</title>
        <authorList>
            <person name="Dietrich F.S."/>
            <person name="Voegeli S."/>
            <person name="Brachat S."/>
            <person name="Lerch A."/>
            <person name="Gates K."/>
            <person name="Steiner S."/>
            <person name="Mohr C."/>
            <person name="Poehlmann R."/>
            <person name="Luedi P."/>
            <person name="Choi S."/>
            <person name="Wing R.A."/>
            <person name="Flavier A."/>
            <person name="Gaffney T.D."/>
            <person name="Philippsen P."/>
        </authorList>
    </citation>
    <scope>NUCLEOTIDE SEQUENCE [LARGE SCALE GENOMIC DNA]</scope>
    <source>
        <strain>ATCC 10895 / CBS 109.51 / FGSC 9923 / NRRL Y-1056</strain>
    </source>
</reference>
<reference key="2">
    <citation type="journal article" date="2013" name="G3 (Bethesda)">
        <title>Genomes of Ashbya fungi isolated from insects reveal four mating-type loci, numerous translocations, lack of transposons, and distinct gene duplications.</title>
        <authorList>
            <person name="Dietrich F.S."/>
            <person name="Voegeli S."/>
            <person name="Kuo S."/>
            <person name="Philippsen P."/>
        </authorList>
    </citation>
    <scope>GENOME REANNOTATION</scope>
    <scope>SEQUENCE REVISION TO 86</scope>
    <source>
        <strain>ATCC 10895 / CBS 109.51 / FGSC 9923 / NRRL Y-1056</strain>
    </source>
</reference>
<sequence length="325" mass="37376">MDRTVQQTDYDALSCRMAAITRGYLPSQKQIEQCGYEGYTEVHVEYCNVLRRLSRRLYSRVQKACTTLLPVMNYGSFVRTVSVDVELHKYVAGFGGRAQVVNLGCGSDLRMCMLLERYPELHYVDVDFAETVKMKREVLMQSAELCRRIGASSTSPQEQDCVLHGPRYRLLAGDLRDTGALLELLQKHTDADLPTVVITECVLCYLPREAAQALIREVCGFYKSGSWISYDPIGGGQREDRFGSIMQSNLREFRQLELPTLMEFNSKEKYSARFPAPSNIQTMWEYYMTDISEDEKRKLKTLQFLDEVEELEILLSHYVILVTSW</sequence>
<accession>Q759U5</accession>
<proteinExistence type="inferred from homology"/>
<organism>
    <name type="scientific">Eremothecium gossypii (strain ATCC 10895 / CBS 109.51 / FGSC 9923 / NRRL Y-1056)</name>
    <name type="common">Yeast</name>
    <name type="synonym">Ashbya gossypii</name>
    <dbReference type="NCBI Taxonomy" id="284811"/>
    <lineage>
        <taxon>Eukaryota</taxon>
        <taxon>Fungi</taxon>
        <taxon>Dikarya</taxon>
        <taxon>Ascomycota</taxon>
        <taxon>Saccharomycotina</taxon>
        <taxon>Saccharomycetes</taxon>
        <taxon>Saccharomycetales</taxon>
        <taxon>Saccharomycetaceae</taxon>
        <taxon>Eremothecium</taxon>
    </lineage>
</organism>
<comment type="function">
    <text evidence="1">Methylates the carboxyl group of the C-terminal leucine residue of protein phosphatase 2A catalytic subunits to form alpha-leucine ester residues.</text>
</comment>
<comment type="catalytic activity">
    <reaction>
        <text>[phosphatase 2A protein]-C-terminal L-leucine + S-adenosyl-L-methionine = [phosphatase 2A protein]-C-terminal L-leucine methyl ester + S-adenosyl-L-homocysteine</text>
        <dbReference type="Rhea" id="RHEA:48544"/>
        <dbReference type="Rhea" id="RHEA-COMP:12134"/>
        <dbReference type="Rhea" id="RHEA-COMP:12135"/>
        <dbReference type="ChEBI" id="CHEBI:57856"/>
        <dbReference type="ChEBI" id="CHEBI:59789"/>
        <dbReference type="ChEBI" id="CHEBI:90516"/>
        <dbReference type="ChEBI" id="CHEBI:90517"/>
        <dbReference type="EC" id="2.1.1.233"/>
    </reaction>
</comment>
<comment type="similarity">
    <text evidence="2">Belongs to the methyltransferase superfamily. LCMT family.</text>
</comment>
<dbReference type="EC" id="2.1.1.233"/>
<dbReference type="EMBL" id="AE016817">
    <property type="protein sequence ID" value="AAS52098.2"/>
    <property type="molecule type" value="Genomic_DNA"/>
</dbReference>
<dbReference type="RefSeq" id="NP_984274.2">
    <property type="nucleotide sequence ID" value="NM_209627.2"/>
</dbReference>
<dbReference type="SMR" id="Q759U5"/>
<dbReference type="FunCoup" id="Q759U5">
    <property type="interactions" value="562"/>
</dbReference>
<dbReference type="STRING" id="284811.Q759U5"/>
<dbReference type="EnsemblFungi" id="AAS52098">
    <property type="protein sequence ID" value="AAS52098"/>
    <property type="gene ID" value="AGOS_ADR178W"/>
</dbReference>
<dbReference type="GeneID" id="4620436"/>
<dbReference type="KEGG" id="ago:AGOS_ADR178W"/>
<dbReference type="eggNOG" id="KOG2918">
    <property type="taxonomic scope" value="Eukaryota"/>
</dbReference>
<dbReference type="HOGENOM" id="CLU_031312_1_0_1"/>
<dbReference type="InParanoid" id="Q759U5"/>
<dbReference type="OMA" id="IIYEPIR"/>
<dbReference type="OrthoDB" id="203237at2759"/>
<dbReference type="Proteomes" id="UP000000591">
    <property type="component" value="Chromosome IV"/>
</dbReference>
<dbReference type="GO" id="GO:0018423">
    <property type="term" value="F:protein C-terminal leucine carboxyl O-methyltransferase activity"/>
    <property type="evidence" value="ECO:0000318"/>
    <property type="project" value="GO_Central"/>
</dbReference>
<dbReference type="GO" id="GO:0032259">
    <property type="term" value="P:methylation"/>
    <property type="evidence" value="ECO:0007669"/>
    <property type="project" value="UniProtKB-KW"/>
</dbReference>
<dbReference type="GO" id="GO:0065003">
    <property type="term" value="P:protein-containing complex assembly"/>
    <property type="evidence" value="ECO:0007669"/>
    <property type="project" value="EnsemblFungi"/>
</dbReference>
<dbReference type="GO" id="GO:0010506">
    <property type="term" value="P:regulation of autophagy"/>
    <property type="evidence" value="ECO:0007669"/>
    <property type="project" value="EnsemblFungi"/>
</dbReference>
<dbReference type="Gene3D" id="3.40.50.150">
    <property type="entry name" value="Vaccinia Virus protein VP39"/>
    <property type="match status" value="1"/>
</dbReference>
<dbReference type="InterPro" id="IPR016651">
    <property type="entry name" value="LCMT1"/>
</dbReference>
<dbReference type="InterPro" id="IPR007213">
    <property type="entry name" value="Ppm1/Ppm2/Tcmp"/>
</dbReference>
<dbReference type="InterPro" id="IPR029063">
    <property type="entry name" value="SAM-dependent_MTases_sf"/>
</dbReference>
<dbReference type="PANTHER" id="PTHR13600">
    <property type="entry name" value="LEUCINE CARBOXYL METHYLTRANSFERASE"/>
    <property type="match status" value="1"/>
</dbReference>
<dbReference type="PANTHER" id="PTHR13600:SF21">
    <property type="entry name" value="LEUCINE CARBOXYL METHYLTRANSFERASE 1"/>
    <property type="match status" value="1"/>
</dbReference>
<dbReference type="Pfam" id="PF04072">
    <property type="entry name" value="LCM"/>
    <property type="match status" value="1"/>
</dbReference>
<dbReference type="PIRSF" id="PIRSF016305">
    <property type="entry name" value="LCM_mtfrase"/>
    <property type="match status" value="1"/>
</dbReference>
<dbReference type="SUPFAM" id="SSF53335">
    <property type="entry name" value="S-adenosyl-L-methionine-dependent methyltransferases"/>
    <property type="match status" value="1"/>
</dbReference>
<evidence type="ECO:0000250" key="1"/>
<evidence type="ECO:0000305" key="2"/>